<gene>
    <name type="primary">marC</name>
    <name type="ordered locus">EcolC_2129</name>
</gene>
<accession>B1IRT1</accession>
<evidence type="ECO:0000250" key="1"/>
<evidence type="ECO:0000255" key="2"/>
<evidence type="ECO:0000305" key="3"/>
<organism>
    <name type="scientific">Escherichia coli (strain ATCC 8739 / DSM 1576 / NBRC 3972 / NCIMB 8545 / WDCM 00012 / Crooks)</name>
    <dbReference type="NCBI Taxonomy" id="481805"/>
    <lineage>
        <taxon>Bacteria</taxon>
        <taxon>Pseudomonadati</taxon>
        <taxon>Pseudomonadota</taxon>
        <taxon>Gammaproteobacteria</taxon>
        <taxon>Enterobacterales</taxon>
        <taxon>Enterobacteriaceae</taxon>
        <taxon>Escherichia</taxon>
    </lineage>
</organism>
<dbReference type="EMBL" id="CP000946">
    <property type="protein sequence ID" value="ACA77769.1"/>
    <property type="molecule type" value="Genomic_DNA"/>
</dbReference>
<dbReference type="RefSeq" id="WP_000885024.1">
    <property type="nucleotide sequence ID" value="NZ_MTFT01000006.1"/>
</dbReference>
<dbReference type="KEGG" id="ecl:EcolC_2129"/>
<dbReference type="HOGENOM" id="CLU_079909_2_0_6"/>
<dbReference type="GO" id="GO:0005886">
    <property type="term" value="C:plasma membrane"/>
    <property type="evidence" value="ECO:0007669"/>
    <property type="project" value="UniProtKB-SubCell"/>
</dbReference>
<dbReference type="InterPro" id="IPR002771">
    <property type="entry name" value="Multi_antbiot-R_MarC"/>
</dbReference>
<dbReference type="NCBIfam" id="TIGR00427">
    <property type="entry name" value="NAAT family transporter"/>
    <property type="match status" value="1"/>
</dbReference>
<dbReference type="NCBIfam" id="NF008228">
    <property type="entry name" value="PRK10995.1"/>
    <property type="match status" value="1"/>
</dbReference>
<dbReference type="PANTHER" id="PTHR33508:SF2">
    <property type="entry name" value="UPF0056 INNER MEMBRANE PROTEIN MARC"/>
    <property type="match status" value="1"/>
</dbReference>
<dbReference type="PANTHER" id="PTHR33508">
    <property type="entry name" value="UPF0056 MEMBRANE PROTEIN YHCE"/>
    <property type="match status" value="1"/>
</dbReference>
<dbReference type="Pfam" id="PF01914">
    <property type="entry name" value="MarC"/>
    <property type="match status" value="1"/>
</dbReference>
<protein>
    <recommendedName>
        <fullName>UPF0056 inner membrane protein MarC</fullName>
    </recommendedName>
</protein>
<comment type="subcellular location">
    <subcellularLocation>
        <location evidence="1">Cell inner membrane</location>
        <topology evidence="1">Multi-pass membrane protein</topology>
    </subcellularLocation>
</comment>
<comment type="similarity">
    <text evidence="3">Belongs to the UPF0056 (MarC) family.</text>
</comment>
<keyword id="KW-0997">Cell inner membrane</keyword>
<keyword id="KW-1003">Cell membrane</keyword>
<keyword id="KW-0472">Membrane</keyword>
<keyword id="KW-0812">Transmembrane</keyword>
<keyword id="KW-1133">Transmembrane helix</keyword>
<name>MARC_ECOLC</name>
<reference key="1">
    <citation type="submission" date="2008-02" db="EMBL/GenBank/DDBJ databases">
        <title>Complete sequence of Escherichia coli C str. ATCC 8739.</title>
        <authorList>
            <person name="Copeland A."/>
            <person name="Lucas S."/>
            <person name="Lapidus A."/>
            <person name="Glavina del Rio T."/>
            <person name="Dalin E."/>
            <person name="Tice H."/>
            <person name="Bruce D."/>
            <person name="Goodwin L."/>
            <person name="Pitluck S."/>
            <person name="Kiss H."/>
            <person name="Brettin T."/>
            <person name="Detter J.C."/>
            <person name="Han C."/>
            <person name="Kuske C.R."/>
            <person name="Schmutz J."/>
            <person name="Larimer F."/>
            <person name="Land M."/>
            <person name="Hauser L."/>
            <person name="Kyrpides N."/>
            <person name="Mikhailova N."/>
            <person name="Ingram L."/>
            <person name="Richardson P."/>
        </authorList>
    </citation>
    <scope>NUCLEOTIDE SEQUENCE [LARGE SCALE GENOMIC DNA]</scope>
    <source>
        <strain>ATCC 8739 / DSM 1576 / NBRC 3972 / NCIMB 8545 / WDCM 00012 / Crooks</strain>
    </source>
</reference>
<proteinExistence type="inferred from homology"/>
<feature type="chain" id="PRO_0000343812" description="UPF0056 inner membrane protein MarC">
    <location>
        <begin position="1"/>
        <end position="221"/>
    </location>
</feature>
<feature type="topological domain" description="Periplasmic" evidence="2">
    <location>
        <begin position="1"/>
        <end position="7"/>
    </location>
</feature>
<feature type="transmembrane region" description="Helical" evidence="2">
    <location>
        <begin position="8"/>
        <end position="28"/>
    </location>
</feature>
<feature type="topological domain" description="Cytoplasmic" evidence="2">
    <location>
        <begin position="29"/>
        <end position="44"/>
    </location>
</feature>
<feature type="transmembrane region" description="Helical" evidence="2">
    <location>
        <begin position="45"/>
        <end position="65"/>
    </location>
</feature>
<feature type="topological domain" description="Periplasmic" evidence="2">
    <location>
        <begin position="66"/>
        <end position="68"/>
    </location>
</feature>
<feature type="transmembrane region" description="Helical" evidence="2">
    <location>
        <begin position="69"/>
        <end position="89"/>
    </location>
</feature>
<feature type="topological domain" description="Cytoplasmic" evidence="2">
    <location>
        <begin position="90"/>
        <end position="118"/>
    </location>
</feature>
<feature type="transmembrane region" description="Helical" evidence="2">
    <location>
        <begin position="119"/>
        <end position="139"/>
    </location>
</feature>
<feature type="topological domain" description="Periplasmic" evidence="2">
    <location>
        <begin position="140"/>
        <end position="154"/>
    </location>
</feature>
<feature type="transmembrane region" description="Helical" evidence="2">
    <location>
        <begin position="155"/>
        <end position="175"/>
    </location>
</feature>
<feature type="topological domain" description="Cytoplasmic" evidence="2">
    <location>
        <begin position="176"/>
        <end position="196"/>
    </location>
</feature>
<feature type="transmembrane region" description="Helical" evidence="2">
    <location>
        <begin position="197"/>
        <end position="217"/>
    </location>
</feature>
<feature type="topological domain" description="Periplasmic" evidence="2">
    <location>
        <begin position="218"/>
        <end position="221"/>
    </location>
</feature>
<sequence length="221" mass="23640">MLDLFKAIGLGLVVLLPLANPLTTVALFLGLAGNMNSAERNRQSLMASVYVFAIMMVAYYAGQLVMDTFGISIPGLRIAGGLIVAFIGFRMLFPQQKAIDSPEAKSKSEELEDEPSAHIAFVPLAMPSTAGPGTIAMIISSASTVRQSSTFADWVLMVAPPLIFFLVAVILWGSLRSSGAIMRLVGKGGIEAISRLMGFLLVCMGVQFIINGILEIIKTYH</sequence>